<proteinExistence type="evidence at transcript level"/>
<evidence type="ECO:0000250" key="1"/>
<evidence type="ECO:0000255" key="2"/>
<evidence type="ECO:0000305" key="3"/>
<comment type="subunit">
    <text evidence="1">Homodimer and heterodimers.</text>
</comment>
<comment type="subcellular location">
    <subcellularLocation>
        <location evidence="1">Cell membrane</location>
        <topology evidence="1">Multi-pass membrane protein</topology>
    </subcellularLocation>
</comment>
<comment type="similarity">
    <text evidence="3">Belongs to the Casparian strip membrane proteins (CASP) family.</text>
</comment>
<dbReference type="EMBL" id="EF082700">
    <property type="protein sequence ID" value="ABK22054.1"/>
    <property type="molecule type" value="mRNA"/>
</dbReference>
<dbReference type="SMR" id="A9NN43"/>
<dbReference type="GO" id="GO:0005886">
    <property type="term" value="C:plasma membrane"/>
    <property type="evidence" value="ECO:0007669"/>
    <property type="project" value="UniProtKB-SubCell"/>
</dbReference>
<dbReference type="InterPro" id="IPR006459">
    <property type="entry name" value="CASP/CASPL"/>
</dbReference>
<dbReference type="InterPro" id="IPR006702">
    <property type="entry name" value="CASP_dom"/>
</dbReference>
<dbReference type="NCBIfam" id="TIGR01569">
    <property type="entry name" value="A_tha_TIGR01569"/>
    <property type="match status" value="1"/>
</dbReference>
<dbReference type="PANTHER" id="PTHR33573:SF48">
    <property type="entry name" value="CASP-LIKE PROTEIN 3A1"/>
    <property type="match status" value="1"/>
</dbReference>
<dbReference type="PANTHER" id="PTHR33573">
    <property type="entry name" value="CASP-LIKE PROTEIN 4A4"/>
    <property type="match status" value="1"/>
</dbReference>
<dbReference type="Pfam" id="PF04535">
    <property type="entry name" value="CASP_dom"/>
    <property type="match status" value="1"/>
</dbReference>
<sequence length="205" mass="21908">MGIGMDSSTMSGPLVAHSGILDGDYEKRPAVCKMQMRFDLANVGLRVLSLACSLVALVSMASNQESGVVTVFGFKLPVYSKWSYSDSFEFLVGASAAAAAHSLLQLLLCGMKMVKRASTIPSRNHAWLLFAGDQVFAYGMLAAASAAAGVTNLNRTGFRHSDLPNFCKPLHRFCDKAAISIVFAFISSLILGGSAVLDVFWLSKN</sequence>
<feature type="chain" id="PRO_0000370320" description="CASP-like protein 3A1">
    <location>
        <begin position="1"/>
        <end position="205"/>
    </location>
</feature>
<feature type="topological domain" description="Cytoplasmic" evidence="2">
    <location>
        <begin position="1"/>
        <end position="39"/>
    </location>
</feature>
<feature type="transmembrane region" description="Helical" evidence="2">
    <location>
        <begin position="40"/>
        <end position="60"/>
    </location>
</feature>
<feature type="topological domain" description="Extracellular" evidence="2">
    <location>
        <begin position="61"/>
        <end position="89"/>
    </location>
</feature>
<feature type="transmembrane region" description="Helical" evidence="2">
    <location>
        <begin position="90"/>
        <end position="110"/>
    </location>
</feature>
<feature type="topological domain" description="Cytoplasmic" evidence="2">
    <location>
        <begin position="111"/>
        <end position="125"/>
    </location>
</feature>
<feature type="transmembrane region" description="Helical" evidence="2">
    <location>
        <begin position="126"/>
        <end position="146"/>
    </location>
</feature>
<feature type="topological domain" description="Extracellular" evidence="2">
    <location>
        <begin position="147"/>
        <end position="176"/>
    </location>
</feature>
<feature type="transmembrane region" description="Helical" evidence="2">
    <location>
        <begin position="177"/>
        <end position="197"/>
    </location>
</feature>
<feature type="topological domain" description="Cytoplasmic" evidence="2">
    <location>
        <begin position="198"/>
        <end position="205"/>
    </location>
</feature>
<feature type="glycosylation site" description="N-linked (GlcNAc...) asparagine" evidence="2">
    <location>
        <position position="154"/>
    </location>
</feature>
<keyword id="KW-1003">Cell membrane</keyword>
<keyword id="KW-0325">Glycoprotein</keyword>
<keyword id="KW-0472">Membrane</keyword>
<keyword id="KW-0812">Transmembrane</keyword>
<keyword id="KW-1133">Transmembrane helix</keyword>
<name>CSPL7_PICSI</name>
<protein>
    <recommendedName>
        <fullName>CASP-like protein 3A1</fullName>
        <shortName>PsCASPL3A1</shortName>
    </recommendedName>
</protein>
<accession>A9NN43</accession>
<reference key="1">
    <citation type="submission" date="2006-10" db="EMBL/GenBank/DDBJ databases">
        <title>The spruce transcriptome: analysis of ca. 6,500 sequence-verified full-length cDNAs.</title>
        <authorList>
            <person name="Ralph S.G."/>
            <person name="Kirkpatrick R."/>
            <person name="Chun H.J.E."/>
            <person name="Palmquist D."/>
            <person name="Wynhoven B."/>
            <person name="Kolosova N."/>
            <person name="Cooper N."/>
            <person name="Oddy C."/>
            <person name="Jancsik S."/>
            <person name="Ritland C.E."/>
            <person name="Douglas C.J."/>
            <person name="Butterfield Y.S.N."/>
            <person name="Liu J."/>
            <person name="Stott J."/>
            <person name="Yang G."/>
            <person name="Barber S."/>
            <person name="Holt R.A."/>
            <person name="Siddiqui A."/>
            <person name="Jones S.J.M."/>
            <person name="Marra M.A."/>
            <person name="Ritland K."/>
            <person name="Bohlmann J."/>
        </authorList>
    </citation>
    <scope>NUCLEOTIDE SEQUENCE [LARGE SCALE MRNA]</scope>
    <source>
        <strain>cv. FB3-425</strain>
        <tissue>Bark</tissue>
    </source>
</reference>
<reference key="2">
    <citation type="journal article" date="2014" name="Plant Physiol.">
        <title>Functional and evolutionary analysis of the CASPARIAN STRIP MEMBRANE DOMAIN PROTEIN family.</title>
        <authorList>
            <person name="Roppolo D."/>
            <person name="Boeckmann B."/>
            <person name="Pfister A."/>
            <person name="Boutet E."/>
            <person name="Rubio M.C."/>
            <person name="Denervaud-Tendon V."/>
            <person name="Vermeer J.E."/>
            <person name="Gheyselinck J."/>
            <person name="Xenarios I."/>
            <person name="Geldner N."/>
        </authorList>
    </citation>
    <scope>GENE FAMILY</scope>
    <scope>NOMENCLATURE</scope>
</reference>
<organism>
    <name type="scientific">Picea sitchensis</name>
    <name type="common">Sitka spruce</name>
    <name type="synonym">Pinus sitchensis</name>
    <dbReference type="NCBI Taxonomy" id="3332"/>
    <lineage>
        <taxon>Eukaryota</taxon>
        <taxon>Viridiplantae</taxon>
        <taxon>Streptophyta</taxon>
        <taxon>Embryophyta</taxon>
        <taxon>Tracheophyta</taxon>
        <taxon>Spermatophyta</taxon>
        <taxon>Pinopsida</taxon>
        <taxon>Pinidae</taxon>
        <taxon>Conifers I</taxon>
        <taxon>Pinales</taxon>
        <taxon>Pinaceae</taxon>
        <taxon>Picea</taxon>
    </lineage>
</organism>